<name>YNL33_YEAST</name>
<sequence length="160" mass="18627">MMPAKLQLDVLRTLQSSARHGTQTLKNSNFLERFHKDRIVFCLPFFPALFFVPVQKVLQHLCLRFTQVAPYFIIQLFDLPSRHAENLAPLLASCRIQYTNCFSSSSNGQVPSIISLYLRVDLSPFYAKKFQIPYRVPMIWLDVFQVFFVFLVISQHSLHS</sequence>
<comment type="subcellular location">
    <subcellularLocation>
        <location evidence="2">Membrane</location>
        <topology evidence="2">Multi-pass membrane protein</topology>
    </subcellularLocation>
</comment>
<comment type="miscellaneous">
    <text evidence="2">Completely overlaps YRF1-6.</text>
</comment>
<comment type="similarity">
    <text evidence="2">Belongs to the UPF0479 family.</text>
</comment>
<comment type="caution">
    <text evidence="3">Product of a dubious gene prediction unlikely to encode a functional protein. Because of that it is not part of the S.cerevisiae S288c complete/reference proteome set.</text>
</comment>
<proteinExistence type="uncertain"/>
<protein>
    <recommendedName>
        <fullName>Putative UPF0479 protein YNL339W-B</fullName>
    </recommendedName>
</protein>
<accession>P0CL36</accession>
<accession>Q8TF93</accession>
<dbReference type="EMBL" id="Z71615">
    <property type="status" value="NOT_ANNOTATED_CDS"/>
    <property type="molecule type" value="Genomic_DNA"/>
</dbReference>
<dbReference type="EMBL" id="AF480015">
    <property type="protein sequence ID" value="AAL79328.1"/>
    <property type="molecule type" value="Genomic_DNA"/>
</dbReference>
<dbReference type="EnsemblFungi" id="YHR219C-A_mRNA">
    <property type="protein sequence ID" value="YHR219C-A"/>
    <property type="gene ID" value="YHR219C-A"/>
</dbReference>
<dbReference type="EnsemblFungi" id="YML133W-B_mRNA">
    <property type="protein sequence ID" value="YML133W-B"/>
    <property type="gene ID" value="YML133W-B"/>
</dbReference>
<dbReference type="EnsemblFungi" id="YNL339W-B_mRNA">
    <property type="protein sequence ID" value="YNL339W-B"/>
    <property type="gene ID" value="YNL339W-B"/>
</dbReference>
<dbReference type="AGR" id="SGD:S000028704"/>
<dbReference type="SGD" id="S000028704">
    <property type="gene designation" value="YNL339W-B"/>
</dbReference>
<dbReference type="GeneTree" id="ENSGT01120000273402"/>
<dbReference type="HOGENOM" id="CLU_139933_0_0_1"/>
<dbReference type="GO" id="GO:0016020">
    <property type="term" value="C:membrane"/>
    <property type="evidence" value="ECO:0007669"/>
    <property type="project" value="UniProtKB-SubCell"/>
</dbReference>
<organism>
    <name type="scientific">Saccharomyces cerevisiae (strain ATCC 204508 / S288c)</name>
    <name type="common">Baker's yeast</name>
    <dbReference type="NCBI Taxonomy" id="559292"/>
    <lineage>
        <taxon>Eukaryota</taxon>
        <taxon>Fungi</taxon>
        <taxon>Dikarya</taxon>
        <taxon>Ascomycota</taxon>
        <taxon>Saccharomycotina</taxon>
        <taxon>Saccharomycetes</taxon>
        <taxon>Saccharomycetales</taxon>
        <taxon>Saccharomycetaceae</taxon>
        <taxon>Saccharomyces</taxon>
    </lineage>
</organism>
<reference key="1">
    <citation type="journal article" date="1997" name="Nature">
        <title>The nucleotide sequence of Saccharomyces cerevisiae chromosome XIV and its evolutionary implications.</title>
        <authorList>
            <person name="Philippsen P."/>
            <person name="Kleine K."/>
            <person name="Poehlmann R."/>
            <person name="Duesterhoeft A."/>
            <person name="Hamberg K."/>
            <person name="Hegemann J.H."/>
            <person name="Obermaier B."/>
            <person name="Urrestarazu L.A."/>
            <person name="Aert R."/>
            <person name="Albermann K."/>
            <person name="Altmann R."/>
            <person name="Andre B."/>
            <person name="Baladron V."/>
            <person name="Ballesta J.P.G."/>
            <person name="Becam A.-M."/>
            <person name="Beinhauer J.D."/>
            <person name="Boskovic J."/>
            <person name="Buitrago M.J."/>
            <person name="Bussereau F."/>
            <person name="Coster F."/>
            <person name="Crouzet M."/>
            <person name="D'Angelo M."/>
            <person name="Dal Pero F."/>
            <person name="De Antoni A."/>
            <person name="del Rey F."/>
            <person name="Doignon F."/>
            <person name="Domdey H."/>
            <person name="Dubois E."/>
            <person name="Fiedler T.A."/>
            <person name="Fleig U."/>
            <person name="Floeth M."/>
            <person name="Fritz C."/>
            <person name="Gaillardin C."/>
            <person name="Garcia-Cantalejo J.M."/>
            <person name="Glansdorff N."/>
            <person name="Goffeau A."/>
            <person name="Gueldener U."/>
            <person name="Herbert C.J."/>
            <person name="Heumann K."/>
            <person name="Heuss-Neitzel D."/>
            <person name="Hilbert H."/>
            <person name="Hinni K."/>
            <person name="Iraqui Houssaini I."/>
            <person name="Jacquet M."/>
            <person name="Jimenez A."/>
            <person name="Jonniaux J.-L."/>
            <person name="Karpfinger-Hartl L."/>
            <person name="Lanfranchi G."/>
            <person name="Lepingle A."/>
            <person name="Levesque H."/>
            <person name="Lyck R."/>
            <person name="Maftahi M."/>
            <person name="Mallet L."/>
            <person name="Maurer C.T.C."/>
            <person name="Messenguy F."/>
            <person name="Mewes H.-W."/>
            <person name="Moestl D."/>
            <person name="Nasr F."/>
            <person name="Nicaud J.-M."/>
            <person name="Niedenthal R.K."/>
            <person name="Pandolfo D."/>
            <person name="Pierard A."/>
            <person name="Piravandi E."/>
            <person name="Planta R.J."/>
            <person name="Pohl T.M."/>
            <person name="Purnelle B."/>
            <person name="Rebischung C."/>
            <person name="Remacha M.A."/>
            <person name="Revuelta J.L."/>
            <person name="Rinke M."/>
            <person name="Saiz J.E."/>
            <person name="Sartorello F."/>
            <person name="Scherens B."/>
            <person name="Sen-Gupta M."/>
            <person name="Soler-Mira A."/>
            <person name="Urbanus J.H.M."/>
            <person name="Valle G."/>
            <person name="Van Dyck L."/>
            <person name="Verhasselt P."/>
            <person name="Vierendeels F."/>
            <person name="Vissers S."/>
            <person name="Voet M."/>
            <person name="Volckaert G."/>
            <person name="Wach A."/>
            <person name="Wambutt R."/>
            <person name="Wedler H."/>
            <person name="Zollner A."/>
            <person name="Hani J."/>
        </authorList>
    </citation>
    <scope>NUCLEOTIDE SEQUENCE [LARGE SCALE GENOMIC DNA]</scope>
    <source>
        <strain>ATCC 204508 / S288c</strain>
    </source>
</reference>
<reference key="2">
    <citation type="journal article" date="2014" name="G3 (Bethesda)">
        <title>The reference genome sequence of Saccharomyces cerevisiae: Then and now.</title>
        <authorList>
            <person name="Engel S.R."/>
            <person name="Dietrich F.S."/>
            <person name="Fisk D.G."/>
            <person name="Binkley G."/>
            <person name="Balakrishnan R."/>
            <person name="Costanzo M.C."/>
            <person name="Dwight S.S."/>
            <person name="Hitz B.C."/>
            <person name="Karra K."/>
            <person name="Nash R.S."/>
            <person name="Weng S."/>
            <person name="Wong E.D."/>
            <person name="Lloyd P."/>
            <person name="Skrzypek M.S."/>
            <person name="Miyasato S.R."/>
            <person name="Simison M."/>
            <person name="Cherry J.M."/>
        </authorList>
    </citation>
    <scope>GENOME REANNOTATION</scope>
    <source>
        <strain>ATCC 204508 / S288c</strain>
    </source>
</reference>
<reference key="3">
    <citation type="journal article" date="2002" name="Nat. Biotechnol.">
        <title>An integrated approach for finding overlooked genes in yeast.</title>
        <authorList>
            <person name="Kumar A."/>
            <person name="Harrison P.M."/>
            <person name="Cheung K.-H."/>
            <person name="Lan N."/>
            <person name="Echols N."/>
            <person name="Bertone P."/>
            <person name="Miller P."/>
            <person name="Gerstein M.B."/>
            <person name="Snyder M."/>
        </authorList>
    </citation>
    <scope>NUCLEOTIDE SEQUENCE [GENOMIC DNA]</scope>
</reference>
<gene>
    <name type="ordered locus">YNL339W-B</name>
</gene>
<evidence type="ECO:0000255" key="1"/>
<evidence type="ECO:0000305" key="2"/>
<evidence type="ECO:0000305" key="3">
    <source>
    </source>
</evidence>
<feature type="chain" id="PRO_0000406011" description="Putative UPF0479 protein YNL339W-B">
    <location>
        <begin position="1"/>
        <end position="160"/>
    </location>
</feature>
<feature type="transmembrane region" description="Helical" evidence="1">
    <location>
        <begin position="39"/>
        <end position="59"/>
    </location>
</feature>
<feature type="transmembrane region" description="Helical" evidence="1">
    <location>
        <begin position="136"/>
        <end position="156"/>
    </location>
</feature>
<keyword id="KW-0472">Membrane</keyword>
<keyword id="KW-0812">Transmembrane</keyword>
<keyword id="KW-1133">Transmembrane helix</keyword>